<proteinExistence type="inferred from homology"/>
<sequence length="312" mass="32729">MRLVFAGTPEFARIALDALLAAGHDVPLVLTQPDRPAGRGLKLTPSPVKQAALAAGIEVAQPRSLRLDGRYPDEAAAARAQLERVAPDVMVVAAYGLILPQWTLDLPRLGCLNIHASLLPRWRGAAPIQRAIEAGDAETGVTIMQMDAGLDTGDMLLERAVPIGAQQTAAQLHDELARVGGQAIVDALAALAQGGLAPRRQPDAGVTYAAKLYKAEAALDCSLPAAVLARRVRAFNPVPGATIRLPGLDDPVKVWRAQALEQAAGGTSGAVLRADAQGIDIATGQGVLRLLELQKAGGKRQPVDVFVRGWQP</sequence>
<protein>
    <recommendedName>
        <fullName evidence="1">Methionyl-tRNA formyltransferase</fullName>
        <ecNumber evidence="1">2.1.2.9</ecNumber>
    </recommendedName>
</protein>
<name>FMT_BORPE</name>
<comment type="function">
    <text evidence="1">Attaches a formyl group to the free amino group of methionyl-tRNA(fMet). The formyl group appears to play a dual role in the initiator identity of N-formylmethionyl-tRNA by promoting its recognition by IF2 and preventing the misappropriation of this tRNA by the elongation apparatus.</text>
</comment>
<comment type="catalytic activity">
    <reaction evidence="1">
        <text>L-methionyl-tRNA(fMet) + (6R)-10-formyltetrahydrofolate = N-formyl-L-methionyl-tRNA(fMet) + (6S)-5,6,7,8-tetrahydrofolate + H(+)</text>
        <dbReference type="Rhea" id="RHEA:24380"/>
        <dbReference type="Rhea" id="RHEA-COMP:9952"/>
        <dbReference type="Rhea" id="RHEA-COMP:9953"/>
        <dbReference type="ChEBI" id="CHEBI:15378"/>
        <dbReference type="ChEBI" id="CHEBI:57453"/>
        <dbReference type="ChEBI" id="CHEBI:78530"/>
        <dbReference type="ChEBI" id="CHEBI:78844"/>
        <dbReference type="ChEBI" id="CHEBI:195366"/>
        <dbReference type="EC" id="2.1.2.9"/>
    </reaction>
</comment>
<comment type="similarity">
    <text evidence="1">Belongs to the Fmt family.</text>
</comment>
<dbReference type="EC" id="2.1.2.9" evidence="1"/>
<dbReference type="EMBL" id="BX640412">
    <property type="protein sequence ID" value="CAE44879.1"/>
    <property type="molecule type" value="Genomic_DNA"/>
</dbReference>
<dbReference type="RefSeq" id="NP_879399.1">
    <property type="nucleotide sequence ID" value="NC_002929.2"/>
</dbReference>
<dbReference type="RefSeq" id="WP_010929873.1">
    <property type="nucleotide sequence ID" value="NZ_CP039022.1"/>
</dbReference>
<dbReference type="SMR" id="Q7VS89"/>
<dbReference type="STRING" id="257313.BP0551"/>
<dbReference type="PaxDb" id="257313-BP0551"/>
<dbReference type="GeneID" id="69600277"/>
<dbReference type="KEGG" id="bpe:BP0551"/>
<dbReference type="PATRIC" id="fig|257313.5.peg.592"/>
<dbReference type="eggNOG" id="COG0223">
    <property type="taxonomic scope" value="Bacteria"/>
</dbReference>
<dbReference type="HOGENOM" id="CLU_033347_1_2_4"/>
<dbReference type="Proteomes" id="UP000002676">
    <property type="component" value="Chromosome"/>
</dbReference>
<dbReference type="GO" id="GO:0005829">
    <property type="term" value="C:cytosol"/>
    <property type="evidence" value="ECO:0007669"/>
    <property type="project" value="TreeGrafter"/>
</dbReference>
<dbReference type="GO" id="GO:0004479">
    <property type="term" value="F:methionyl-tRNA formyltransferase activity"/>
    <property type="evidence" value="ECO:0007669"/>
    <property type="project" value="UniProtKB-UniRule"/>
</dbReference>
<dbReference type="CDD" id="cd08646">
    <property type="entry name" value="FMT_core_Met-tRNA-FMT_N"/>
    <property type="match status" value="1"/>
</dbReference>
<dbReference type="CDD" id="cd08704">
    <property type="entry name" value="Met_tRNA_FMT_C"/>
    <property type="match status" value="1"/>
</dbReference>
<dbReference type="Gene3D" id="3.10.25.10">
    <property type="entry name" value="Formyl transferase, C-terminal domain"/>
    <property type="match status" value="1"/>
</dbReference>
<dbReference type="Gene3D" id="3.40.50.170">
    <property type="entry name" value="Formyl transferase, N-terminal domain"/>
    <property type="match status" value="1"/>
</dbReference>
<dbReference type="HAMAP" id="MF_00182">
    <property type="entry name" value="Formyl_trans"/>
    <property type="match status" value="1"/>
</dbReference>
<dbReference type="InterPro" id="IPR005794">
    <property type="entry name" value="Fmt"/>
</dbReference>
<dbReference type="InterPro" id="IPR005793">
    <property type="entry name" value="Formyl_trans_C"/>
</dbReference>
<dbReference type="InterPro" id="IPR037022">
    <property type="entry name" value="Formyl_trans_C_sf"/>
</dbReference>
<dbReference type="InterPro" id="IPR002376">
    <property type="entry name" value="Formyl_transf_N"/>
</dbReference>
<dbReference type="InterPro" id="IPR036477">
    <property type="entry name" value="Formyl_transf_N_sf"/>
</dbReference>
<dbReference type="InterPro" id="IPR011034">
    <property type="entry name" value="Formyl_transferase-like_C_sf"/>
</dbReference>
<dbReference type="InterPro" id="IPR001555">
    <property type="entry name" value="GART_AS"/>
</dbReference>
<dbReference type="InterPro" id="IPR044135">
    <property type="entry name" value="Met-tRNA-FMT_C"/>
</dbReference>
<dbReference type="InterPro" id="IPR041711">
    <property type="entry name" value="Met-tRNA-FMT_N"/>
</dbReference>
<dbReference type="NCBIfam" id="TIGR00460">
    <property type="entry name" value="fmt"/>
    <property type="match status" value="1"/>
</dbReference>
<dbReference type="PANTHER" id="PTHR11138">
    <property type="entry name" value="METHIONYL-TRNA FORMYLTRANSFERASE"/>
    <property type="match status" value="1"/>
</dbReference>
<dbReference type="PANTHER" id="PTHR11138:SF5">
    <property type="entry name" value="METHIONYL-TRNA FORMYLTRANSFERASE, MITOCHONDRIAL"/>
    <property type="match status" value="1"/>
</dbReference>
<dbReference type="Pfam" id="PF02911">
    <property type="entry name" value="Formyl_trans_C"/>
    <property type="match status" value="1"/>
</dbReference>
<dbReference type="Pfam" id="PF00551">
    <property type="entry name" value="Formyl_trans_N"/>
    <property type="match status" value="1"/>
</dbReference>
<dbReference type="SUPFAM" id="SSF50486">
    <property type="entry name" value="FMT C-terminal domain-like"/>
    <property type="match status" value="1"/>
</dbReference>
<dbReference type="SUPFAM" id="SSF53328">
    <property type="entry name" value="Formyltransferase"/>
    <property type="match status" value="1"/>
</dbReference>
<dbReference type="PROSITE" id="PS00373">
    <property type="entry name" value="GART"/>
    <property type="match status" value="1"/>
</dbReference>
<reference key="1">
    <citation type="journal article" date="2003" name="Nat. Genet.">
        <title>Comparative analysis of the genome sequences of Bordetella pertussis, Bordetella parapertussis and Bordetella bronchiseptica.</title>
        <authorList>
            <person name="Parkhill J."/>
            <person name="Sebaihia M."/>
            <person name="Preston A."/>
            <person name="Murphy L.D."/>
            <person name="Thomson N.R."/>
            <person name="Harris D.E."/>
            <person name="Holden M.T.G."/>
            <person name="Churcher C.M."/>
            <person name="Bentley S.D."/>
            <person name="Mungall K.L."/>
            <person name="Cerdeno-Tarraga A.-M."/>
            <person name="Temple L."/>
            <person name="James K.D."/>
            <person name="Harris B."/>
            <person name="Quail M.A."/>
            <person name="Achtman M."/>
            <person name="Atkin R."/>
            <person name="Baker S."/>
            <person name="Basham D."/>
            <person name="Bason N."/>
            <person name="Cherevach I."/>
            <person name="Chillingworth T."/>
            <person name="Collins M."/>
            <person name="Cronin A."/>
            <person name="Davis P."/>
            <person name="Doggett J."/>
            <person name="Feltwell T."/>
            <person name="Goble A."/>
            <person name="Hamlin N."/>
            <person name="Hauser H."/>
            <person name="Holroyd S."/>
            <person name="Jagels K."/>
            <person name="Leather S."/>
            <person name="Moule S."/>
            <person name="Norberczak H."/>
            <person name="O'Neil S."/>
            <person name="Ormond D."/>
            <person name="Price C."/>
            <person name="Rabbinowitsch E."/>
            <person name="Rutter S."/>
            <person name="Sanders M."/>
            <person name="Saunders D."/>
            <person name="Seeger K."/>
            <person name="Sharp S."/>
            <person name="Simmonds M."/>
            <person name="Skelton J."/>
            <person name="Squares R."/>
            <person name="Squares S."/>
            <person name="Stevens K."/>
            <person name="Unwin L."/>
            <person name="Whitehead S."/>
            <person name="Barrell B.G."/>
            <person name="Maskell D.J."/>
        </authorList>
    </citation>
    <scope>NUCLEOTIDE SEQUENCE [LARGE SCALE GENOMIC DNA]</scope>
    <source>
        <strain>Tohama I / ATCC BAA-589 / NCTC 13251</strain>
    </source>
</reference>
<feature type="chain" id="PRO_0000082928" description="Methionyl-tRNA formyltransferase">
    <location>
        <begin position="1"/>
        <end position="312"/>
    </location>
</feature>
<feature type="binding site" evidence="1">
    <location>
        <begin position="117"/>
        <end position="120"/>
    </location>
    <ligand>
        <name>(6S)-5,6,7,8-tetrahydrofolate</name>
        <dbReference type="ChEBI" id="CHEBI:57453"/>
    </ligand>
</feature>
<accession>Q7VS89</accession>
<keyword id="KW-0648">Protein biosynthesis</keyword>
<keyword id="KW-1185">Reference proteome</keyword>
<keyword id="KW-0808">Transferase</keyword>
<evidence type="ECO:0000255" key="1">
    <source>
        <dbReference type="HAMAP-Rule" id="MF_00182"/>
    </source>
</evidence>
<gene>
    <name evidence="1" type="primary">fmt</name>
    <name type="ordered locus">BP0551</name>
</gene>
<organism>
    <name type="scientific">Bordetella pertussis (strain Tohama I / ATCC BAA-589 / NCTC 13251)</name>
    <dbReference type="NCBI Taxonomy" id="257313"/>
    <lineage>
        <taxon>Bacteria</taxon>
        <taxon>Pseudomonadati</taxon>
        <taxon>Pseudomonadota</taxon>
        <taxon>Betaproteobacteria</taxon>
        <taxon>Burkholderiales</taxon>
        <taxon>Alcaligenaceae</taxon>
        <taxon>Bordetella</taxon>
    </lineage>
</organism>